<gene>
    <name type="primary">Tnfaip6</name>
    <name type="synonym">Tnfip6</name>
    <name type="synonym">Tsg6</name>
</gene>
<dbReference type="EMBL" id="U83903">
    <property type="protein sequence ID" value="AAC53527.1"/>
    <property type="molecule type" value="mRNA"/>
</dbReference>
<dbReference type="EMBL" id="BC021155">
    <property type="protein sequence ID" value="AAH21155.1"/>
    <property type="molecule type" value="mRNA"/>
</dbReference>
<dbReference type="CCDS" id="CCDS16032.1"/>
<dbReference type="PIR" id="JC6506">
    <property type="entry name" value="JC6506"/>
</dbReference>
<dbReference type="RefSeq" id="NP_033424.1">
    <property type="nucleotide sequence ID" value="NM_009398.2"/>
</dbReference>
<dbReference type="BMRB" id="O08859"/>
<dbReference type="SMR" id="O08859"/>
<dbReference type="BioGRID" id="204244">
    <property type="interactions" value="1"/>
</dbReference>
<dbReference type="FunCoup" id="O08859">
    <property type="interactions" value="624"/>
</dbReference>
<dbReference type="STRING" id="10090.ENSMUSP00000069231"/>
<dbReference type="GlyCosmos" id="O08859">
    <property type="glycosylation" value="2 sites, No reported glycans"/>
</dbReference>
<dbReference type="GlyGen" id="O08859">
    <property type="glycosylation" value="2 sites"/>
</dbReference>
<dbReference type="iPTMnet" id="O08859"/>
<dbReference type="PhosphoSitePlus" id="O08859"/>
<dbReference type="PaxDb" id="10090-ENSMUSP00000069231"/>
<dbReference type="ProteomicsDB" id="298145"/>
<dbReference type="Antibodypedia" id="33651">
    <property type="antibodies" value="193 antibodies from 32 providers"/>
</dbReference>
<dbReference type="DNASU" id="21930"/>
<dbReference type="Ensembl" id="ENSMUST00000065927.6">
    <property type="protein sequence ID" value="ENSMUSP00000069231.6"/>
    <property type="gene ID" value="ENSMUSG00000053475.6"/>
</dbReference>
<dbReference type="GeneID" id="21930"/>
<dbReference type="KEGG" id="mmu:21930"/>
<dbReference type="UCSC" id="uc008jqp.1">
    <property type="organism name" value="mouse"/>
</dbReference>
<dbReference type="AGR" id="MGI:1195266"/>
<dbReference type="CTD" id="7130"/>
<dbReference type="MGI" id="MGI:1195266">
    <property type="gene designation" value="Tnfaip6"/>
</dbReference>
<dbReference type="VEuPathDB" id="HostDB:ENSMUSG00000053475"/>
<dbReference type="eggNOG" id="KOG1218">
    <property type="taxonomic scope" value="Eukaryota"/>
</dbReference>
<dbReference type="eggNOG" id="KOG3714">
    <property type="taxonomic scope" value="Eukaryota"/>
</dbReference>
<dbReference type="GeneTree" id="ENSGT00940000157201"/>
<dbReference type="HOGENOM" id="CLU_092089_0_0_1"/>
<dbReference type="InParanoid" id="O08859"/>
<dbReference type="OMA" id="IGFHMCA"/>
<dbReference type="OrthoDB" id="6369184at2759"/>
<dbReference type="PhylomeDB" id="O08859"/>
<dbReference type="TreeFam" id="TF334173"/>
<dbReference type="Reactome" id="R-MMU-6798695">
    <property type="pathway name" value="Neutrophil degranulation"/>
</dbReference>
<dbReference type="BioGRID-ORCS" id="21930">
    <property type="hits" value="3 hits in 78 CRISPR screens"/>
</dbReference>
<dbReference type="ChiTaRS" id="Tnfaip6">
    <property type="organism name" value="mouse"/>
</dbReference>
<dbReference type="PRO" id="PR:O08859"/>
<dbReference type="Proteomes" id="UP000000589">
    <property type="component" value="Chromosome 2"/>
</dbReference>
<dbReference type="RNAct" id="O08859">
    <property type="molecule type" value="protein"/>
</dbReference>
<dbReference type="Bgee" id="ENSMUSG00000053475">
    <property type="expression patterns" value="Expressed in 1st arch maxillary component and 170 other cell types or tissues"/>
</dbReference>
<dbReference type="ExpressionAtlas" id="O08859">
    <property type="expression patterns" value="baseline and differential"/>
</dbReference>
<dbReference type="GO" id="GO:0005576">
    <property type="term" value="C:extracellular region"/>
    <property type="evidence" value="ECO:0000250"/>
    <property type="project" value="UniProtKB"/>
</dbReference>
<dbReference type="GO" id="GO:0005615">
    <property type="term" value="C:extracellular space"/>
    <property type="evidence" value="ECO:0007669"/>
    <property type="project" value="Ensembl"/>
</dbReference>
<dbReference type="GO" id="GO:0005509">
    <property type="term" value="F:calcium ion binding"/>
    <property type="evidence" value="ECO:0000250"/>
    <property type="project" value="UniProtKB"/>
</dbReference>
<dbReference type="GO" id="GO:0106435">
    <property type="term" value="F:carboxylesterase activity"/>
    <property type="evidence" value="ECO:0007669"/>
    <property type="project" value="Ensembl"/>
</dbReference>
<dbReference type="GO" id="GO:0001968">
    <property type="term" value="F:fibronectin binding"/>
    <property type="evidence" value="ECO:0000250"/>
    <property type="project" value="UniProtKB"/>
</dbReference>
<dbReference type="GO" id="GO:0005540">
    <property type="term" value="F:hyaluronic acid binding"/>
    <property type="evidence" value="ECO:0000250"/>
    <property type="project" value="UniProtKB"/>
</dbReference>
<dbReference type="GO" id="GO:0007155">
    <property type="term" value="P:cell adhesion"/>
    <property type="evidence" value="ECO:0007669"/>
    <property type="project" value="UniProtKB-KW"/>
</dbReference>
<dbReference type="GO" id="GO:1905590">
    <property type="term" value="P:fibronectin fibril organization"/>
    <property type="evidence" value="ECO:0000250"/>
    <property type="project" value="UniProtKB"/>
</dbReference>
<dbReference type="GO" id="GO:0030212">
    <property type="term" value="P:hyaluronan metabolic process"/>
    <property type="evidence" value="ECO:0000250"/>
    <property type="project" value="UniProtKB"/>
</dbReference>
<dbReference type="GO" id="GO:0030514">
    <property type="term" value="P:negative regulation of BMP signaling pathway"/>
    <property type="evidence" value="ECO:0000250"/>
    <property type="project" value="UniProtKB"/>
</dbReference>
<dbReference type="GO" id="GO:0050728">
    <property type="term" value="P:negative regulation of inflammatory response"/>
    <property type="evidence" value="ECO:0007669"/>
    <property type="project" value="Ensembl"/>
</dbReference>
<dbReference type="GO" id="GO:0090024">
    <property type="term" value="P:negative regulation of neutrophil chemotaxis"/>
    <property type="evidence" value="ECO:0000250"/>
    <property type="project" value="UniProtKB"/>
</dbReference>
<dbReference type="GO" id="GO:0045668">
    <property type="term" value="P:negative regulation of osteoblast differentiation"/>
    <property type="evidence" value="ECO:0000250"/>
    <property type="project" value="UniProtKB"/>
</dbReference>
<dbReference type="GO" id="GO:0045671">
    <property type="term" value="P:negative regulation of osteoclast differentiation"/>
    <property type="evidence" value="ECO:0000250"/>
    <property type="project" value="UniProtKB"/>
</dbReference>
<dbReference type="GO" id="GO:0001550">
    <property type="term" value="P:ovarian cumulus expansion"/>
    <property type="evidence" value="ECO:0000315"/>
    <property type="project" value="UniProtKB"/>
</dbReference>
<dbReference type="GO" id="GO:0030335">
    <property type="term" value="P:positive regulation of cell migration"/>
    <property type="evidence" value="ECO:0007669"/>
    <property type="project" value="Ensembl"/>
</dbReference>
<dbReference type="GO" id="GO:1903911">
    <property type="term" value="P:positive regulation of receptor clustering"/>
    <property type="evidence" value="ECO:0000250"/>
    <property type="project" value="UniProtKB"/>
</dbReference>
<dbReference type="CDD" id="cd00041">
    <property type="entry name" value="CUB"/>
    <property type="match status" value="1"/>
</dbReference>
<dbReference type="CDD" id="cd03515">
    <property type="entry name" value="Link_domain_TSG_6_like"/>
    <property type="match status" value="1"/>
</dbReference>
<dbReference type="FunFam" id="3.10.100.10:FF:000001">
    <property type="entry name" value="Hyaluronan proteoglycan link protein 1"/>
    <property type="match status" value="1"/>
</dbReference>
<dbReference type="FunFam" id="2.60.120.290:FF:000005">
    <property type="entry name" value="Procollagen C-endopeptidase enhancer 1"/>
    <property type="match status" value="1"/>
</dbReference>
<dbReference type="Gene3D" id="3.10.100.10">
    <property type="entry name" value="Mannose-Binding Protein A, subunit A"/>
    <property type="match status" value="1"/>
</dbReference>
<dbReference type="Gene3D" id="2.60.120.290">
    <property type="entry name" value="Spermadhesin, CUB domain"/>
    <property type="match status" value="1"/>
</dbReference>
<dbReference type="InterPro" id="IPR016186">
    <property type="entry name" value="C-type_lectin-like/link_sf"/>
</dbReference>
<dbReference type="InterPro" id="IPR016187">
    <property type="entry name" value="CTDL_fold"/>
</dbReference>
<dbReference type="InterPro" id="IPR000859">
    <property type="entry name" value="CUB_dom"/>
</dbReference>
<dbReference type="InterPro" id="IPR000538">
    <property type="entry name" value="Link_dom"/>
</dbReference>
<dbReference type="InterPro" id="IPR035914">
    <property type="entry name" value="Sperma_CUB_dom_sf"/>
</dbReference>
<dbReference type="InterPro" id="IPR052129">
    <property type="entry name" value="Spermadhesin-Link_domain"/>
</dbReference>
<dbReference type="PANTHER" id="PTHR46908">
    <property type="entry name" value="CUBILIN-LIKE PROTEIN"/>
    <property type="match status" value="1"/>
</dbReference>
<dbReference type="PANTHER" id="PTHR46908:SF4">
    <property type="entry name" value="TUMOR NECROSIS FACTOR-INDUCIBLE GENE 6 PROTEIN"/>
    <property type="match status" value="1"/>
</dbReference>
<dbReference type="Pfam" id="PF00431">
    <property type="entry name" value="CUB"/>
    <property type="match status" value="1"/>
</dbReference>
<dbReference type="Pfam" id="PF00193">
    <property type="entry name" value="Xlink"/>
    <property type="match status" value="1"/>
</dbReference>
<dbReference type="PRINTS" id="PR01265">
    <property type="entry name" value="LINKMODULE"/>
</dbReference>
<dbReference type="SMART" id="SM00042">
    <property type="entry name" value="CUB"/>
    <property type="match status" value="1"/>
</dbReference>
<dbReference type="SMART" id="SM00445">
    <property type="entry name" value="LINK"/>
    <property type="match status" value="1"/>
</dbReference>
<dbReference type="SUPFAM" id="SSF56436">
    <property type="entry name" value="C-type lectin-like"/>
    <property type="match status" value="1"/>
</dbReference>
<dbReference type="SUPFAM" id="SSF49854">
    <property type="entry name" value="Spermadhesin, CUB domain"/>
    <property type="match status" value="1"/>
</dbReference>
<dbReference type="PROSITE" id="PS01180">
    <property type="entry name" value="CUB"/>
    <property type="match status" value="1"/>
</dbReference>
<dbReference type="PROSITE" id="PS01241">
    <property type="entry name" value="LINK_1"/>
    <property type="match status" value="1"/>
</dbReference>
<dbReference type="PROSITE" id="PS50963">
    <property type="entry name" value="LINK_2"/>
    <property type="match status" value="1"/>
</dbReference>
<keyword id="KW-0106">Calcium</keyword>
<keyword id="KW-0130">Cell adhesion</keyword>
<keyword id="KW-1015">Disulfide bond</keyword>
<keyword id="KW-0325">Glycoprotein</keyword>
<keyword id="KW-0378">Hydrolase</keyword>
<keyword id="KW-0479">Metal-binding</keyword>
<keyword id="KW-1185">Reference proteome</keyword>
<keyword id="KW-0964">Secreted</keyword>
<keyword id="KW-0732">Signal</keyword>
<accession>O08859</accession>
<protein>
    <recommendedName>
        <fullName>Tumor necrosis factor-inducible gene 6 protein</fullName>
    </recommendedName>
    <alternativeName>
        <fullName>TNF-stimulated gene 6 protein</fullName>
        <shortName>TSG-6</shortName>
    </alternativeName>
    <alternativeName>
        <fullName>Tumor necrosis factor alpha-induced protein 6</fullName>
        <shortName>TNF alpha-induced protein 6</shortName>
    </alternativeName>
</protein>
<sequence>MVVLLCLCVLLWEEAHGWGFKNGIFHNSIWLEQAAGVYHREARAGRYKLTYAEAKAVCEFEGGRLATYKQLEAARKIGFHVCAAGWMAKGRVGYPIVKPGPNCGFGKTGIIDYGIRLNRSERWDAYCYNPHAKECGGVFTDPKRIFKSPGFPNEYDDNQVCYWHIRLKYGQRIHLSFLDFDLEHDPGCLADYVEIYDSYDDVHGFVGRYCGDELPEDIISTGNVMTLKFLSDASVTAGGFQIKYVTVDPASKSSQAKNTSTTGNKKFLPGRFSHL</sequence>
<reference key="1">
    <citation type="journal article" date="1997" name="Gene">
        <title>Coding sequence, exon-intron structure and chromosomal localization of murine TNF-stimulated gene 6 that is specifically expressed by expanding cumulus cell-oocyte complexes.</title>
        <authorList>
            <person name="Fueloep C."/>
            <person name="Kamath R.V."/>
            <person name="Li Y."/>
            <person name="Otto J.M."/>
            <person name="Salustri A."/>
            <person name="Olsen B.R."/>
            <person name="Glant T.T."/>
            <person name="Hascall V.C."/>
        </authorList>
    </citation>
    <scope>NUCLEOTIDE SEQUENCE [MRNA]</scope>
    <scope>DEVELOPMENTAL STAGE</scope>
    <source>
        <strain>CD-1</strain>
        <tissue>Embryo</tissue>
        <tissue>Oocyte</tissue>
        <tissue>Ovarian granulosa cell</tissue>
    </source>
</reference>
<reference key="2">
    <citation type="journal article" date="2004" name="Genome Res.">
        <title>The status, quality, and expansion of the NIH full-length cDNA project: the Mammalian Gene Collection (MGC).</title>
        <authorList>
            <consortium name="The MGC Project Team"/>
        </authorList>
    </citation>
    <scope>NUCLEOTIDE SEQUENCE [LARGE SCALE MRNA]</scope>
    <source>
        <strain>FVB/N</strain>
        <tissue>Colon</tissue>
    </source>
</reference>
<reference key="3">
    <citation type="journal article" date="2003" name="Development">
        <title>Impaired cumulus mucification and female sterility in tumor necrosis factor-induced protein-6 deficient mice.</title>
        <authorList>
            <person name="Fueloep C."/>
            <person name="Szanto S."/>
            <person name="Mukhopadhyay D."/>
            <person name="Bardos T."/>
            <person name="Kamath R.V."/>
            <person name="Rugg M.S."/>
            <person name="Day A.J."/>
            <person name="Salustri A."/>
            <person name="Hascall V.C."/>
            <person name="Glant T.T."/>
            <person name="Mikecz K."/>
        </authorList>
    </citation>
    <scope>FUNCTION</scope>
    <scope>DISRUPTION PHENOTYPE</scope>
</reference>
<reference key="4">
    <citation type="journal article" date="2008" name="J. Biol. Chem.">
        <title>TSG-6 regulates bone remodeling through inhibition of osteoblastogenesis and osteoclast activation.</title>
        <authorList>
            <person name="Mahoney D.J."/>
            <person name="Mikecz K."/>
            <person name="Ali T."/>
            <person name="Mabilleau G."/>
            <person name="Benayahu D."/>
            <person name="Plaas A."/>
            <person name="Milner C.M."/>
            <person name="Day A.J."/>
            <person name="Sabokbar A."/>
        </authorList>
    </citation>
    <scope>FUNCTION</scope>
    <scope>DISRUPTION PHENOTYPE</scope>
    <scope>TISSUE SPECIFICITY</scope>
</reference>
<name>TSG6_MOUSE</name>
<feature type="signal peptide" evidence="2">
    <location>
        <begin position="1"/>
        <end position="17"/>
    </location>
</feature>
<feature type="chain" id="PRO_0000026693" description="Tumor necrosis factor-inducible gene 6 protein" evidence="2">
    <location>
        <begin position="18"/>
        <end position="275"/>
    </location>
</feature>
<feature type="domain" description="Link" evidence="4">
    <location>
        <begin position="36"/>
        <end position="129"/>
    </location>
</feature>
<feature type="domain" description="CUB" evidence="3">
    <location>
        <begin position="135"/>
        <end position="247"/>
    </location>
</feature>
<feature type="region of interest" description="Disordered" evidence="5">
    <location>
        <begin position="253"/>
        <end position="275"/>
    </location>
</feature>
<feature type="compositionally biased region" description="Polar residues" evidence="5">
    <location>
        <begin position="253"/>
        <end position="264"/>
    </location>
</feature>
<feature type="binding site" evidence="1">
    <location>
        <position position="183"/>
    </location>
    <ligand>
        <name>Ca(2+)</name>
        <dbReference type="ChEBI" id="CHEBI:29108"/>
    </ligand>
</feature>
<feature type="binding site" evidence="1">
    <location>
        <position position="191"/>
    </location>
    <ligand>
        <name>Ca(2+)</name>
        <dbReference type="ChEBI" id="CHEBI:29108"/>
    </ligand>
</feature>
<feature type="binding site" evidence="1">
    <location>
        <position position="232"/>
    </location>
    <ligand>
        <name>Ca(2+)</name>
        <dbReference type="ChEBI" id="CHEBI:29108"/>
    </ligand>
</feature>
<feature type="binding site" evidence="1">
    <location>
        <position position="234"/>
    </location>
    <ligand>
        <name>Ca(2+)</name>
        <dbReference type="ChEBI" id="CHEBI:29108"/>
    </ligand>
</feature>
<feature type="binding site" evidence="1">
    <location>
        <position position="235"/>
    </location>
    <ligand>
        <name>Ca(2+)</name>
        <dbReference type="ChEBI" id="CHEBI:29108"/>
    </ligand>
</feature>
<feature type="glycosylation site" description="N-linked (GlcNAc...) asparagine" evidence="2">
    <location>
        <position position="118"/>
    </location>
</feature>
<feature type="glycosylation site" description="N-linked (GlcNAc...) asparagine" evidence="2">
    <location>
        <position position="258"/>
    </location>
</feature>
<feature type="disulfide bond" evidence="4">
    <location>
        <begin position="58"/>
        <end position="127"/>
    </location>
</feature>
<feature type="disulfide bond" evidence="4">
    <location>
        <begin position="82"/>
        <end position="103"/>
    </location>
</feature>
<feature type="disulfide bond" evidence="3">
    <location>
        <begin position="135"/>
        <end position="161"/>
    </location>
</feature>
<feature type="disulfide bond" evidence="3">
    <location>
        <begin position="188"/>
        <end position="210"/>
    </location>
</feature>
<evidence type="ECO:0000250" key="1">
    <source>
        <dbReference type="UniProtKB" id="P98066"/>
    </source>
</evidence>
<evidence type="ECO:0000255" key="2"/>
<evidence type="ECO:0000255" key="3">
    <source>
        <dbReference type="PROSITE-ProRule" id="PRU00059"/>
    </source>
</evidence>
<evidence type="ECO:0000255" key="4">
    <source>
        <dbReference type="PROSITE-ProRule" id="PRU00323"/>
    </source>
</evidence>
<evidence type="ECO:0000256" key="5">
    <source>
        <dbReference type="SAM" id="MobiDB-lite"/>
    </source>
</evidence>
<evidence type="ECO:0000269" key="6">
    <source>
    </source>
</evidence>
<evidence type="ECO:0000269" key="7">
    <source>
    </source>
</evidence>
<evidence type="ECO:0000269" key="8">
    <source>
    </source>
</evidence>
<proteinExistence type="evidence at protein level"/>
<organism>
    <name type="scientific">Mus musculus</name>
    <name type="common">Mouse</name>
    <dbReference type="NCBI Taxonomy" id="10090"/>
    <lineage>
        <taxon>Eukaryota</taxon>
        <taxon>Metazoa</taxon>
        <taxon>Chordata</taxon>
        <taxon>Craniata</taxon>
        <taxon>Vertebrata</taxon>
        <taxon>Euteleostomi</taxon>
        <taxon>Mammalia</taxon>
        <taxon>Eutheria</taxon>
        <taxon>Euarchontoglires</taxon>
        <taxon>Glires</taxon>
        <taxon>Rodentia</taxon>
        <taxon>Myomorpha</taxon>
        <taxon>Muroidea</taxon>
        <taxon>Muridae</taxon>
        <taxon>Murinae</taxon>
        <taxon>Mus</taxon>
        <taxon>Mus</taxon>
    </lineage>
</organism>
<comment type="function">
    <text evidence="1 6 7">Major regulator of extracellular matrix organization during tissue remodeling (By similarity). Catalyzes the transfer of a heavy chain (HC) from inter-alpha-inhibitor (I-alpha-I) complex to hyaluronan. Cleaves the ester bond between the C-terminus of the HC and GalNAc residue of the chondroitin sulfate chain in I-alpha-I complex followed by transesterification of the HC to hyaluronan. In the process, potentiates the antiprotease function of I-alpha-I complex through release of free bikunin (By similarity). Acts as a catalyst in the formation of hyaluronan-HC oligomers and hyaluronan-rich matrix surrounding the cumulus cell-oocyte complex, a necessary step for oocyte fertilization (PubMed:12668637). Assembles hyaluronan in pericellular matrices that serve as platforms for receptor clustering and signaling. Enables binding of hyaluronan deposited on the surface of macrophages to LYVE1 on lymphatic endothelium and facilitates macrophage extravasation. Alters hyaluronan binding to functionally latent CD44 on vascular endothelium, switching CD44 into an active state that supports leukocyte rolling (By similarity). Modulates the interaction of chemokines with extracellular matrix components and proteoglycans on endothelial cell surface, likely preventing chemokine gradient formation. In a negative feedback mechanism, may limit excessive neutrophil recruitment at inflammatory sites by antagonizing the association of CXCL8 with glycosaminoglycans on vascular endothelium (By similarity). Has a role in osteogenesis and bone remodeling. Inhibits BMP2-dependent differentiation of mesenchymal stem cell to osteoblasts. Protects against bone erosion during inflammation by inhibiting TNFSF11/RANKL-dependent osteoclast activation (By similarity) (PubMed:18586671).</text>
</comment>
<comment type="subunit">
    <text evidence="1">Interacts (via Link domain) with inter-alpha-inhibitor (I-alpha-I) component bikunin. Interacts with ITIH2/HC2; this interaction is required for transesterification of the HC to hyaluronan. Interacts (via Link and CUB domains) with ITIH1. Chondroitin sulfate may be required for the stability of the complex. Interacts (via Link domain) with various C-X-C and C-C chemokines including PF4, CXCL8, CXCL11, CXCL12, CCL2, CCL7, CCL19, CCL21, and CCL27; this interaction interferes with chemokine binding to glycosaminoglycans. Interacts (primarily via Link domain) with BMP2; this interaction is inhibited by hyaluronan. Interacts (via both Link and CUB domains) with TNFSF11. Interacts (via CUB domain) with FN1 (via type III repeats 9-14); this interaction enhances fibronectin fibril assembly. TNFAIP6 may act as a bridging molecule between FN1 and THBS1.</text>
</comment>
<comment type="subcellular location">
    <subcellularLocation>
        <location evidence="1">Secreted</location>
    </subcellularLocation>
</comment>
<comment type="tissue specificity">
    <text evidence="7">Expressed in epiphyseal and metaphyseal bone marrow of both the femur and tibia (at protein level).</text>
</comment>
<comment type="developmental stage">
    <text evidence="8">Expressed in cumulus cell-oocyte complexes during expansion.</text>
</comment>
<comment type="domain">
    <text evidence="1">The Link domain interacts with various extracellular matrix components, including heparin, heparan sulfates, hyaluronan and I-alpha-I complex. It is required for binding to various chemokines.</text>
</comment>
<comment type="domain">
    <text evidence="1">The CUB domain is necessary for calcium ion binding and transesterification reaction. It is required for binding to FN1.</text>
</comment>
<comment type="disruption phenotype">
    <text evidence="6 7">Mutant female mice are infertile due to impaired cumulus oophorus expansion upon gonadotropin surge (PubMed:12668637). Mutant mice have twice the bone mass of wild-type littermates. They show increased trabecular number and trabecular thickness (PubMed:18586671).</text>
</comment>